<reference key="1">
    <citation type="submission" date="2006-09" db="EMBL/GenBank/DDBJ databases">
        <authorList>
            <consortium name="NIH - Zebrafish Gene Collection (ZGC) project"/>
        </authorList>
    </citation>
    <scope>NUCLEOTIDE SEQUENCE [LARGE SCALE MRNA]</scope>
</reference>
<comment type="function">
    <text evidence="1">Component of the Mediator complex, a coactivator involved in the regulated transcription of nearly all RNA polymerase II-dependent genes. Mediator functions as a bridge to convey information from gene-specific regulatory proteins to the basal RNA polymerase II transcription machinery. Mediator is recruited to promoters by direct interactions with regulatory proteins and serves as a scaffold for the assembly of a functional preinitiation complex with RNA polymerase II and the general transcription factors (By similarity).</text>
</comment>
<comment type="subunit">
    <text evidence="1">Component of the Mediator complex.</text>
</comment>
<comment type="subcellular location">
    <subcellularLocation>
        <location evidence="3">Nucleus</location>
    </subcellularLocation>
</comment>
<comment type="similarity">
    <text evidence="3">Belongs to the Mediator complex subunit 17 family.</text>
</comment>
<organism>
    <name type="scientific">Danio rerio</name>
    <name type="common">Zebrafish</name>
    <name type="synonym">Brachydanio rerio</name>
    <dbReference type="NCBI Taxonomy" id="7955"/>
    <lineage>
        <taxon>Eukaryota</taxon>
        <taxon>Metazoa</taxon>
        <taxon>Chordata</taxon>
        <taxon>Craniata</taxon>
        <taxon>Vertebrata</taxon>
        <taxon>Euteleostomi</taxon>
        <taxon>Actinopterygii</taxon>
        <taxon>Neopterygii</taxon>
        <taxon>Teleostei</taxon>
        <taxon>Ostariophysi</taxon>
        <taxon>Cypriniformes</taxon>
        <taxon>Danionidae</taxon>
        <taxon>Danioninae</taxon>
        <taxon>Danio</taxon>
    </lineage>
</organism>
<feature type="chain" id="PRO_0000304702" description="Mediator of RNA polymerase II transcription subunit 17">
    <location>
        <begin position="1"/>
        <end position="643"/>
    </location>
</feature>
<feature type="region of interest" description="Disordered" evidence="2">
    <location>
        <begin position="53"/>
        <end position="82"/>
    </location>
</feature>
<feature type="compositionally biased region" description="Basic and acidic residues" evidence="2">
    <location>
        <begin position="60"/>
        <end position="73"/>
    </location>
</feature>
<sequence length="643" mass="72324">MSGGPAVRVSIESSCERQVQEVSLDGMETYVPPLSMSQNLAKLVQRIDFCQSSDSEEDGAERARAGREQWKQEPEEDEGQLKFQPSLWPWDSVRNNLRSALTEMCVLHDVLSVLKERKYMTLDPVSQDPAMAKTPQVFQLISKKKSLGTAAQLLLKGAEKLSKSVSENQEQRRQRDFNSELLRLRSQWKLRKVGDKILGDLSYRSAGSLFPHHGTFEVIKNTDIDLDKKIPDDYCPLNVQIPSDLEGSAYIKVSIQKQSPDIGDLGTVNLFRRQAKAKPASQMWHSRLEAAQNVLLCKEIFAQLSREAVQIKSQIPHIVVKNQIISQPFPGLQLSISLCHSTGEKKSQRSSPDKSKPDDHLYVLEHNLHQLIREFHKQTLSSVVMPHPASAPFGHKRLRLAGPLAYDKAEISSLQQTEGLLEKIIKQAKHIFLRSRTARTIDSLASRIEDPQIQAHWSNINDVYESSVKVLITSQGYEQICKSIQLQLNICVEQIRVVHRDGRVITLSHQEQELQDFLLSQMSQHQVHAVQQLAKVMGWHVLSFSNHVGLGSIESIGNASSITVASPSGEYAISVRNGPESGCKVLVQFPRSQAKDAGRSDAVQDGKWTQLRGAHREVHWDRMEGKNFVYKMELLMAALTPCP</sequence>
<name>MED17_DANRE</name>
<evidence type="ECO:0000250" key="1"/>
<evidence type="ECO:0000256" key="2">
    <source>
        <dbReference type="SAM" id="MobiDB-lite"/>
    </source>
</evidence>
<evidence type="ECO:0000305" key="3"/>
<keyword id="KW-0010">Activator</keyword>
<keyword id="KW-0539">Nucleus</keyword>
<keyword id="KW-1185">Reference proteome</keyword>
<keyword id="KW-0804">Transcription</keyword>
<keyword id="KW-0805">Transcription regulation</keyword>
<accession>Q08BY1</accession>
<protein>
    <recommendedName>
        <fullName>Mediator of RNA polymerase II transcription subunit 17</fullName>
    </recommendedName>
    <alternativeName>
        <fullName>Cofactor required for Sp1 transcriptional activation subunit 6</fullName>
        <shortName>CRSP complex subunit 6</shortName>
    </alternativeName>
    <alternativeName>
        <fullName>Mediator complex subunit 17</fullName>
    </alternativeName>
</protein>
<dbReference type="EMBL" id="BC124507">
    <property type="protein sequence ID" value="AAI24508.1"/>
    <property type="molecule type" value="mRNA"/>
</dbReference>
<dbReference type="RefSeq" id="NP_001071042.1">
    <property type="nucleotide sequence ID" value="NM_001077574.1"/>
</dbReference>
<dbReference type="SMR" id="Q08BY1"/>
<dbReference type="FunCoup" id="Q08BY1">
    <property type="interactions" value="1979"/>
</dbReference>
<dbReference type="STRING" id="7955.ENSDARP00000023604"/>
<dbReference type="GeneID" id="567560"/>
<dbReference type="KEGG" id="dre:567560"/>
<dbReference type="AGR" id="ZFIN:ZDB-GENE-040302-1"/>
<dbReference type="CTD" id="9440"/>
<dbReference type="ZFIN" id="ZDB-GENE-040302-1">
    <property type="gene designation" value="med17"/>
</dbReference>
<dbReference type="eggNOG" id="KOG4512">
    <property type="taxonomic scope" value="Eukaryota"/>
</dbReference>
<dbReference type="InParanoid" id="Q08BY1"/>
<dbReference type="OrthoDB" id="10058398at2759"/>
<dbReference type="PhylomeDB" id="Q08BY1"/>
<dbReference type="PRO" id="PR:Q08BY1"/>
<dbReference type="Proteomes" id="UP000000437">
    <property type="component" value="Chromosome 15"/>
</dbReference>
<dbReference type="GO" id="GO:0070847">
    <property type="term" value="C:core mediator complex"/>
    <property type="evidence" value="ECO:0000318"/>
    <property type="project" value="GO_Central"/>
</dbReference>
<dbReference type="GO" id="GO:0016592">
    <property type="term" value="C:mediator complex"/>
    <property type="evidence" value="ECO:0000318"/>
    <property type="project" value="GO_Central"/>
</dbReference>
<dbReference type="GO" id="GO:0003712">
    <property type="term" value="F:transcription coregulator activity"/>
    <property type="evidence" value="ECO:0000318"/>
    <property type="project" value="GO_Central"/>
</dbReference>
<dbReference type="GO" id="GO:0006357">
    <property type="term" value="P:regulation of transcription by RNA polymerase II"/>
    <property type="evidence" value="ECO:0000318"/>
    <property type="project" value="GO_Central"/>
</dbReference>
<dbReference type="InterPro" id="IPR019313">
    <property type="entry name" value="Mediator_Med17"/>
</dbReference>
<dbReference type="PANTHER" id="PTHR13114">
    <property type="entry name" value="MEDIATOR OF RNA POLYMERASE II TRANSCRIPTION SUBUNIT 17"/>
    <property type="match status" value="1"/>
</dbReference>
<dbReference type="PANTHER" id="PTHR13114:SF7">
    <property type="entry name" value="MEDIATOR OF RNA POLYMERASE II TRANSCRIPTION SUBUNIT 17"/>
    <property type="match status" value="1"/>
</dbReference>
<dbReference type="Pfam" id="PF10156">
    <property type="entry name" value="Med17"/>
    <property type="match status" value="1"/>
</dbReference>
<gene>
    <name type="primary">med17</name>
    <name type="synonym">crsp6</name>
</gene>
<proteinExistence type="evidence at transcript level"/>